<name>HEMH_FRATW</name>
<protein>
    <recommendedName>
        <fullName evidence="1">Ferrochelatase</fullName>
        <ecNumber evidence="1">4.98.1.1</ecNumber>
    </recommendedName>
    <alternativeName>
        <fullName evidence="1">Heme synthase</fullName>
    </alternativeName>
    <alternativeName>
        <fullName evidence="1">Protoheme ferro-lyase</fullName>
    </alternativeName>
</protein>
<gene>
    <name evidence="1" type="primary">hemH</name>
    <name type="ordered locus">FTW_1172</name>
</gene>
<keyword id="KW-0963">Cytoplasm</keyword>
<keyword id="KW-0350">Heme biosynthesis</keyword>
<keyword id="KW-0408">Iron</keyword>
<keyword id="KW-0456">Lyase</keyword>
<keyword id="KW-0479">Metal-binding</keyword>
<keyword id="KW-0627">Porphyrin biosynthesis</keyword>
<reference key="1">
    <citation type="journal article" date="2007" name="PLoS ONE">
        <title>Complete genomic characterization of a pathogenic A.II strain of Francisella tularensis subspecies tularensis.</title>
        <authorList>
            <person name="Beckstrom-Sternberg S.M."/>
            <person name="Auerbach R.K."/>
            <person name="Godbole S."/>
            <person name="Pearson J.V."/>
            <person name="Beckstrom-Sternberg J.S."/>
            <person name="Deng Z."/>
            <person name="Munk C."/>
            <person name="Kubota K."/>
            <person name="Zhou Y."/>
            <person name="Bruce D."/>
            <person name="Noronha J."/>
            <person name="Scheuermann R.H."/>
            <person name="Wang A."/>
            <person name="Wei X."/>
            <person name="Wang J."/>
            <person name="Hao J."/>
            <person name="Wagner D.M."/>
            <person name="Brettin T.S."/>
            <person name="Brown N."/>
            <person name="Gilna P."/>
            <person name="Keim P.S."/>
        </authorList>
    </citation>
    <scope>NUCLEOTIDE SEQUENCE [LARGE SCALE GENOMIC DNA]</scope>
    <source>
        <strain>WY96-3418</strain>
    </source>
</reference>
<dbReference type="EC" id="4.98.1.1" evidence="1"/>
<dbReference type="EMBL" id="CP000608">
    <property type="protein sequence ID" value="ABO46976.1"/>
    <property type="molecule type" value="Genomic_DNA"/>
</dbReference>
<dbReference type="RefSeq" id="WP_003026386.1">
    <property type="nucleotide sequence ID" value="NC_009257.1"/>
</dbReference>
<dbReference type="SMR" id="A4IYH5"/>
<dbReference type="KEGG" id="ftw:FTW_1172"/>
<dbReference type="HOGENOM" id="CLU_018884_0_0_6"/>
<dbReference type="UniPathway" id="UPA00252">
    <property type="reaction ID" value="UER00325"/>
</dbReference>
<dbReference type="GO" id="GO:0005737">
    <property type="term" value="C:cytoplasm"/>
    <property type="evidence" value="ECO:0007669"/>
    <property type="project" value="UniProtKB-SubCell"/>
</dbReference>
<dbReference type="GO" id="GO:0004325">
    <property type="term" value="F:ferrochelatase activity"/>
    <property type="evidence" value="ECO:0007669"/>
    <property type="project" value="UniProtKB-UniRule"/>
</dbReference>
<dbReference type="GO" id="GO:0046872">
    <property type="term" value="F:metal ion binding"/>
    <property type="evidence" value="ECO:0007669"/>
    <property type="project" value="UniProtKB-KW"/>
</dbReference>
<dbReference type="GO" id="GO:0006783">
    <property type="term" value="P:heme biosynthetic process"/>
    <property type="evidence" value="ECO:0007669"/>
    <property type="project" value="UniProtKB-UniRule"/>
</dbReference>
<dbReference type="CDD" id="cd00419">
    <property type="entry name" value="Ferrochelatase_C"/>
    <property type="match status" value="1"/>
</dbReference>
<dbReference type="CDD" id="cd03411">
    <property type="entry name" value="Ferrochelatase_N"/>
    <property type="match status" value="1"/>
</dbReference>
<dbReference type="FunFam" id="3.40.50.1400:FF:000002">
    <property type="entry name" value="Ferrochelatase"/>
    <property type="match status" value="1"/>
</dbReference>
<dbReference type="Gene3D" id="3.40.50.1400">
    <property type="match status" value="2"/>
</dbReference>
<dbReference type="HAMAP" id="MF_00323">
    <property type="entry name" value="Ferrochelatase"/>
    <property type="match status" value="1"/>
</dbReference>
<dbReference type="InterPro" id="IPR001015">
    <property type="entry name" value="Ferrochelatase"/>
</dbReference>
<dbReference type="InterPro" id="IPR019772">
    <property type="entry name" value="Ferrochelatase_AS"/>
</dbReference>
<dbReference type="InterPro" id="IPR033644">
    <property type="entry name" value="Ferrochelatase_C"/>
</dbReference>
<dbReference type="InterPro" id="IPR033659">
    <property type="entry name" value="Ferrochelatase_N"/>
</dbReference>
<dbReference type="NCBIfam" id="TIGR00109">
    <property type="entry name" value="hemH"/>
    <property type="match status" value="1"/>
</dbReference>
<dbReference type="PANTHER" id="PTHR11108">
    <property type="entry name" value="FERROCHELATASE"/>
    <property type="match status" value="1"/>
</dbReference>
<dbReference type="PANTHER" id="PTHR11108:SF1">
    <property type="entry name" value="FERROCHELATASE, MITOCHONDRIAL"/>
    <property type="match status" value="1"/>
</dbReference>
<dbReference type="Pfam" id="PF00762">
    <property type="entry name" value="Ferrochelatase"/>
    <property type="match status" value="1"/>
</dbReference>
<dbReference type="SUPFAM" id="SSF53800">
    <property type="entry name" value="Chelatase"/>
    <property type="match status" value="1"/>
</dbReference>
<dbReference type="PROSITE" id="PS00534">
    <property type="entry name" value="FERROCHELATASE"/>
    <property type="match status" value="1"/>
</dbReference>
<comment type="function">
    <text evidence="1">Catalyzes the ferrous insertion into protoporphyrin IX.</text>
</comment>
<comment type="catalytic activity">
    <reaction evidence="1">
        <text>heme b + 2 H(+) = protoporphyrin IX + Fe(2+)</text>
        <dbReference type="Rhea" id="RHEA:22584"/>
        <dbReference type="ChEBI" id="CHEBI:15378"/>
        <dbReference type="ChEBI" id="CHEBI:29033"/>
        <dbReference type="ChEBI" id="CHEBI:57306"/>
        <dbReference type="ChEBI" id="CHEBI:60344"/>
        <dbReference type="EC" id="4.98.1.1"/>
    </reaction>
</comment>
<comment type="pathway">
    <text evidence="1">Porphyrin-containing compound metabolism; protoheme biosynthesis; protoheme from protoporphyrin-IX: step 1/1.</text>
</comment>
<comment type="subcellular location">
    <subcellularLocation>
        <location evidence="1">Cytoplasm</location>
    </subcellularLocation>
</comment>
<comment type="similarity">
    <text evidence="1">Belongs to the ferrochelatase family.</text>
</comment>
<sequence length="333" mass="39020">MQQYSSKYNKQAILLVNLGTPDNYDTKSIKRYLKEFLSDPRVIEANPVLWKIILNLIILPIRAKKNVHTYKTVWNKQHNKSPLLFYTENLADKLDKKLDNYIVDYAMRYGNPSIESKIKSLQDQGATEIIIFPLYPQYSATTTATVYDEVYRVLSKLRWQPTIKGINPYYDNKFHIQTISQQIKEHLKKLDSTPDTVLFSFHGLPKEYFDKGDPYYCHCYKTYRLVKEELQNEYPNIDFELSFQSRFGPKKWLEPYTTVKLEEFAKQNKSVVVIAPGFSADCLETLEELAISEKENFIKKGGKEFSLIPCLNDSNQHVDMLYNIIDEEICLKK</sequence>
<feature type="chain" id="PRO_1000019304" description="Ferrochelatase">
    <location>
        <begin position="1"/>
        <end position="333"/>
    </location>
</feature>
<feature type="binding site" evidence="1">
    <location>
        <position position="202"/>
    </location>
    <ligand>
        <name>Fe cation</name>
        <dbReference type="ChEBI" id="CHEBI:24875"/>
    </ligand>
</feature>
<feature type="binding site" evidence="1">
    <location>
        <position position="284"/>
    </location>
    <ligand>
        <name>Fe cation</name>
        <dbReference type="ChEBI" id="CHEBI:24875"/>
    </ligand>
</feature>
<accession>A4IYH5</accession>
<proteinExistence type="inferred from homology"/>
<organism>
    <name type="scientific">Francisella tularensis subsp. tularensis (strain WY96-3418)</name>
    <dbReference type="NCBI Taxonomy" id="418136"/>
    <lineage>
        <taxon>Bacteria</taxon>
        <taxon>Pseudomonadati</taxon>
        <taxon>Pseudomonadota</taxon>
        <taxon>Gammaproteobacteria</taxon>
        <taxon>Thiotrichales</taxon>
        <taxon>Francisellaceae</taxon>
        <taxon>Francisella</taxon>
    </lineage>
</organism>
<evidence type="ECO:0000255" key="1">
    <source>
        <dbReference type="HAMAP-Rule" id="MF_00323"/>
    </source>
</evidence>